<evidence type="ECO:0000255" key="1">
    <source>
        <dbReference type="HAMAP-Rule" id="MF_00169"/>
    </source>
</evidence>
<keyword id="KW-0028">Amino-acid biosynthesis</keyword>
<keyword id="KW-0057">Aromatic amino acid biosynthesis</keyword>
<keyword id="KW-0456">Lyase</keyword>
<feature type="chain" id="PRO_1000023499" description="3-dehydroquinate dehydratase">
    <location>
        <begin position="1"/>
        <end position="150"/>
    </location>
</feature>
<feature type="active site" description="Proton acceptor" evidence="1">
    <location>
        <position position="23"/>
    </location>
</feature>
<feature type="active site" description="Proton donor" evidence="1">
    <location>
        <position position="101"/>
    </location>
</feature>
<feature type="binding site" evidence="1">
    <location>
        <position position="75"/>
    </location>
    <ligand>
        <name>substrate</name>
    </ligand>
</feature>
<feature type="binding site" evidence="1">
    <location>
        <position position="81"/>
    </location>
    <ligand>
        <name>substrate</name>
    </ligand>
</feature>
<feature type="binding site" evidence="1">
    <location>
        <position position="88"/>
    </location>
    <ligand>
        <name>substrate</name>
    </ligand>
</feature>
<feature type="binding site" evidence="1">
    <location>
        <begin position="102"/>
        <end position="103"/>
    </location>
    <ligand>
        <name>substrate</name>
    </ligand>
</feature>
<feature type="binding site" evidence="1">
    <location>
        <position position="112"/>
    </location>
    <ligand>
        <name>substrate</name>
    </ligand>
</feature>
<feature type="site" description="Transition state stabilizer" evidence="1">
    <location>
        <position position="18"/>
    </location>
</feature>
<accession>Q4ZN43</accession>
<comment type="function">
    <text evidence="1">Catalyzes a trans-dehydration via an enolate intermediate.</text>
</comment>
<comment type="catalytic activity">
    <reaction evidence="1">
        <text>3-dehydroquinate = 3-dehydroshikimate + H2O</text>
        <dbReference type="Rhea" id="RHEA:21096"/>
        <dbReference type="ChEBI" id="CHEBI:15377"/>
        <dbReference type="ChEBI" id="CHEBI:16630"/>
        <dbReference type="ChEBI" id="CHEBI:32364"/>
        <dbReference type="EC" id="4.2.1.10"/>
    </reaction>
</comment>
<comment type="pathway">
    <text evidence="1">Metabolic intermediate biosynthesis; chorismate biosynthesis; chorismate from D-erythrose 4-phosphate and phosphoenolpyruvate: step 3/7.</text>
</comment>
<comment type="subunit">
    <text evidence="1">Homododecamer.</text>
</comment>
<comment type="similarity">
    <text evidence="1">Belongs to the type-II 3-dehydroquinase family.</text>
</comment>
<proteinExistence type="inferred from homology"/>
<organism>
    <name type="scientific">Pseudomonas syringae pv. syringae (strain B728a)</name>
    <dbReference type="NCBI Taxonomy" id="205918"/>
    <lineage>
        <taxon>Bacteria</taxon>
        <taxon>Pseudomonadati</taxon>
        <taxon>Pseudomonadota</taxon>
        <taxon>Gammaproteobacteria</taxon>
        <taxon>Pseudomonadales</taxon>
        <taxon>Pseudomonadaceae</taxon>
        <taxon>Pseudomonas</taxon>
        <taxon>Pseudomonas syringae</taxon>
    </lineage>
</organism>
<sequence>MATILVLHGPNLNLLGTREPGVYGTITLPQINQDLEQRARDAGHHLMYLQSNAEYELIDRIHAARGEGVDFILINPAAFTHTSVAIRDALMGVSIPFIEVHLSNVHKREPFRHHSYFSDVAVGVICGLGASGYRLALEAALEQLAASAKP</sequence>
<dbReference type="EC" id="4.2.1.10" evidence="1"/>
<dbReference type="EMBL" id="CP000075">
    <property type="protein sequence ID" value="AAY39429.1"/>
    <property type="molecule type" value="Genomic_DNA"/>
</dbReference>
<dbReference type="RefSeq" id="WP_002555369.1">
    <property type="nucleotide sequence ID" value="NC_007005.1"/>
</dbReference>
<dbReference type="RefSeq" id="YP_237467.1">
    <property type="nucleotide sequence ID" value="NC_007005.1"/>
</dbReference>
<dbReference type="SMR" id="Q4ZN43"/>
<dbReference type="STRING" id="205918.Psyr_4399"/>
<dbReference type="GeneID" id="69861454"/>
<dbReference type="KEGG" id="psb:Psyr_4399"/>
<dbReference type="PATRIC" id="fig|205918.7.peg.4541"/>
<dbReference type="eggNOG" id="COG0757">
    <property type="taxonomic scope" value="Bacteria"/>
</dbReference>
<dbReference type="HOGENOM" id="CLU_090968_1_0_6"/>
<dbReference type="OrthoDB" id="9790793at2"/>
<dbReference type="UniPathway" id="UPA00053">
    <property type="reaction ID" value="UER00086"/>
</dbReference>
<dbReference type="Proteomes" id="UP000000426">
    <property type="component" value="Chromosome"/>
</dbReference>
<dbReference type="GO" id="GO:0003855">
    <property type="term" value="F:3-dehydroquinate dehydratase activity"/>
    <property type="evidence" value="ECO:0007669"/>
    <property type="project" value="UniProtKB-UniRule"/>
</dbReference>
<dbReference type="GO" id="GO:0008652">
    <property type="term" value="P:amino acid biosynthetic process"/>
    <property type="evidence" value="ECO:0007669"/>
    <property type="project" value="UniProtKB-KW"/>
</dbReference>
<dbReference type="GO" id="GO:0009073">
    <property type="term" value="P:aromatic amino acid family biosynthetic process"/>
    <property type="evidence" value="ECO:0007669"/>
    <property type="project" value="UniProtKB-KW"/>
</dbReference>
<dbReference type="GO" id="GO:0009423">
    <property type="term" value="P:chorismate biosynthetic process"/>
    <property type="evidence" value="ECO:0007669"/>
    <property type="project" value="UniProtKB-UniRule"/>
</dbReference>
<dbReference type="GO" id="GO:0019631">
    <property type="term" value="P:quinate catabolic process"/>
    <property type="evidence" value="ECO:0007669"/>
    <property type="project" value="TreeGrafter"/>
</dbReference>
<dbReference type="CDD" id="cd00466">
    <property type="entry name" value="DHQase_II"/>
    <property type="match status" value="1"/>
</dbReference>
<dbReference type="Gene3D" id="3.40.50.9100">
    <property type="entry name" value="Dehydroquinase, class II"/>
    <property type="match status" value="1"/>
</dbReference>
<dbReference type="HAMAP" id="MF_00169">
    <property type="entry name" value="AroQ"/>
    <property type="match status" value="1"/>
</dbReference>
<dbReference type="InterPro" id="IPR001874">
    <property type="entry name" value="DHquinase_II"/>
</dbReference>
<dbReference type="InterPro" id="IPR018509">
    <property type="entry name" value="DHquinase_II_CS"/>
</dbReference>
<dbReference type="InterPro" id="IPR036441">
    <property type="entry name" value="DHquinase_II_sf"/>
</dbReference>
<dbReference type="NCBIfam" id="TIGR01088">
    <property type="entry name" value="aroQ"/>
    <property type="match status" value="1"/>
</dbReference>
<dbReference type="NCBIfam" id="NF003804">
    <property type="entry name" value="PRK05395.1-1"/>
    <property type="match status" value="1"/>
</dbReference>
<dbReference type="NCBIfam" id="NF003805">
    <property type="entry name" value="PRK05395.1-2"/>
    <property type="match status" value="1"/>
</dbReference>
<dbReference type="NCBIfam" id="NF003806">
    <property type="entry name" value="PRK05395.1-3"/>
    <property type="match status" value="1"/>
</dbReference>
<dbReference type="NCBIfam" id="NF003807">
    <property type="entry name" value="PRK05395.1-4"/>
    <property type="match status" value="1"/>
</dbReference>
<dbReference type="PANTHER" id="PTHR21272">
    <property type="entry name" value="CATABOLIC 3-DEHYDROQUINASE"/>
    <property type="match status" value="1"/>
</dbReference>
<dbReference type="PANTHER" id="PTHR21272:SF3">
    <property type="entry name" value="CATABOLIC 3-DEHYDROQUINASE"/>
    <property type="match status" value="1"/>
</dbReference>
<dbReference type="Pfam" id="PF01220">
    <property type="entry name" value="DHquinase_II"/>
    <property type="match status" value="1"/>
</dbReference>
<dbReference type="PIRSF" id="PIRSF001399">
    <property type="entry name" value="DHquinase_II"/>
    <property type="match status" value="1"/>
</dbReference>
<dbReference type="SUPFAM" id="SSF52304">
    <property type="entry name" value="Type II 3-dehydroquinate dehydratase"/>
    <property type="match status" value="1"/>
</dbReference>
<dbReference type="PROSITE" id="PS01029">
    <property type="entry name" value="DEHYDROQUINASE_II"/>
    <property type="match status" value="1"/>
</dbReference>
<protein>
    <recommendedName>
        <fullName evidence="1">3-dehydroquinate dehydratase</fullName>
        <shortName evidence="1">3-dehydroquinase</shortName>
        <ecNumber evidence="1">4.2.1.10</ecNumber>
    </recommendedName>
    <alternativeName>
        <fullName evidence="1">Type II DHQase</fullName>
    </alternativeName>
</protein>
<reference key="1">
    <citation type="journal article" date="2005" name="Proc. Natl. Acad. Sci. U.S.A.">
        <title>Comparison of the complete genome sequences of Pseudomonas syringae pv. syringae B728a and pv. tomato DC3000.</title>
        <authorList>
            <person name="Feil H."/>
            <person name="Feil W.S."/>
            <person name="Chain P."/>
            <person name="Larimer F."/>
            <person name="Dibartolo G."/>
            <person name="Copeland A."/>
            <person name="Lykidis A."/>
            <person name="Trong S."/>
            <person name="Nolan M."/>
            <person name="Goltsman E."/>
            <person name="Thiel J."/>
            <person name="Malfatti S."/>
            <person name="Loper J.E."/>
            <person name="Lapidus A."/>
            <person name="Detter J.C."/>
            <person name="Land M."/>
            <person name="Richardson P.M."/>
            <person name="Kyrpides N.C."/>
            <person name="Ivanova N."/>
            <person name="Lindow S.E."/>
        </authorList>
    </citation>
    <scope>NUCLEOTIDE SEQUENCE [LARGE SCALE GENOMIC DNA]</scope>
    <source>
        <strain>B728a</strain>
    </source>
</reference>
<gene>
    <name evidence="1" type="primary">aroQ</name>
    <name type="ordered locus">Psyr_4399</name>
</gene>
<name>AROQ_PSEU2</name>